<protein>
    <recommendedName>
        <fullName>Microfibril-associated glycoprotein 4</fullName>
    </recommendedName>
</protein>
<gene>
    <name type="primary">MFAP4</name>
</gene>
<sequence length="255" mass="28648">MKALLALPLLLLLSTPPCAPQVSGIRGDALERFCLQQPLDCDDIYAQGYQSDGVYLIYPSGPSVPVPVFCDMTTEGGKWTVFQKRFNGSVSFFRGWNDYKLGFGRADGEYWLGLQNMHLLTLKQKYELRVDLEDFENNTAYAKYADFSISPNAVSAEEDGYTLFVAGFEDGGAGDSLSYHSGQKFSTFDRDQDLFVQNCAALSSGAFWFRSCHFANLNGFYLGGSHLSYANGINWAQWKGFYYSLKRTEMKIRRA</sequence>
<proteinExistence type="evidence at protein level"/>
<comment type="function">
    <text evidence="7">Could be involved in calcium-dependent cell adhesion or intercellular interactions. May contribute to the elastic fiber assembly and/or maintenance (PubMed:26601954).</text>
</comment>
<comment type="subunit">
    <text evidence="7">Homodimer. Can also form higher oligomers. Interacts with FBN1, FBN2 and LOX. Interacts with COL1A1 in a Ca (2+)-dependent manner. Interacts with ELN in a Ca (2+)-dependent manner; this interaction promotes ELN self-assembly (PubMed:26601954).</text>
</comment>
<comment type="subcellular location">
    <subcellularLocation>
        <location evidence="7">Secreted</location>
        <location evidence="7">Extracellular space</location>
        <location evidence="7">Extracellular matrix</location>
    </subcellularLocation>
</comment>
<comment type="alternative products">
    <event type="alternative splicing"/>
    <isoform>
        <id>P55083-1</id>
        <name>1</name>
        <sequence type="displayed"/>
    </isoform>
    <isoform>
        <id>P55083-2</id>
        <name>2</name>
        <sequence type="described" ref="VSP_045831"/>
    </isoform>
</comment>
<comment type="sequence caution" evidence="9">
    <conflict type="erroneous initiation">
        <sequence resource="EMBL-CDS" id="AAB00968"/>
    </conflict>
    <text>Extended N-terminus.</text>
</comment>
<comment type="sequence caution" evidence="9">
    <conflict type="erroneous termination">
        <sequence resource="EMBL-CDS" id="BAG65329"/>
    </conflict>
    <text>Extended C-terminus.</text>
</comment>
<keyword id="KW-0002">3D-structure</keyword>
<keyword id="KW-0025">Alternative splicing</keyword>
<keyword id="KW-0106">Calcium</keyword>
<keyword id="KW-0130">Cell adhesion</keyword>
<keyword id="KW-0903">Direct protein sequencing</keyword>
<keyword id="KW-0272">Extracellular matrix</keyword>
<keyword id="KW-0325">Glycoprotein</keyword>
<keyword id="KW-1267">Proteomics identification</keyword>
<keyword id="KW-1185">Reference proteome</keyword>
<keyword id="KW-0964">Secreted</keyword>
<keyword id="KW-0732">Signal</keyword>
<name>MFAP4_HUMAN</name>
<reference key="1">
    <citation type="journal article" date="1995" name="Hum. Mol. Genet.">
        <title>The gene for a human microfibril-associated glycoprotein is commonly deleted in Smith-Magenis syndrome patients.</title>
        <authorList>
            <person name="Zhao Z."/>
            <person name="Lee C.-C."/>
            <person name="Jiralerspong S."/>
            <person name="Juyal R.C."/>
            <person name="Lu F."/>
            <person name="Baldini A."/>
            <person name="Greenberg F."/>
            <person name="Caskey C.T."/>
            <person name="Patel P.I."/>
        </authorList>
    </citation>
    <scope>NUCLEOTIDE SEQUENCE [MRNA] (ISOFORM 1)</scope>
    <source>
        <tissue>Placenta</tissue>
    </source>
</reference>
<reference key="2">
    <citation type="journal article" date="2004" name="Nat. Genet.">
        <title>Complete sequencing and characterization of 21,243 full-length human cDNAs.</title>
        <authorList>
            <person name="Ota T."/>
            <person name="Suzuki Y."/>
            <person name="Nishikawa T."/>
            <person name="Otsuki T."/>
            <person name="Sugiyama T."/>
            <person name="Irie R."/>
            <person name="Wakamatsu A."/>
            <person name="Hayashi K."/>
            <person name="Sato H."/>
            <person name="Nagai K."/>
            <person name="Kimura K."/>
            <person name="Makita H."/>
            <person name="Sekine M."/>
            <person name="Obayashi M."/>
            <person name="Nishi T."/>
            <person name="Shibahara T."/>
            <person name="Tanaka T."/>
            <person name="Ishii S."/>
            <person name="Yamamoto J."/>
            <person name="Saito K."/>
            <person name="Kawai Y."/>
            <person name="Isono Y."/>
            <person name="Nakamura Y."/>
            <person name="Nagahari K."/>
            <person name="Murakami K."/>
            <person name="Yasuda T."/>
            <person name="Iwayanagi T."/>
            <person name="Wagatsuma M."/>
            <person name="Shiratori A."/>
            <person name="Sudo H."/>
            <person name="Hosoiri T."/>
            <person name="Kaku Y."/>
            <person name="Kodaira H."/>
            <person name="Kondo H."/>
            <person name="Sugawara M."/>
            <person name="Takahashi M."/>
            <person name="Kanda K."/>
            <person name="Yokoi T."/>
            <person name="Furuya T."/>
            <person name="Kikkawa E."/>
            <person name="Omura Y."/>
            <person name="Abe K."/>
            <person name="Kamihara K."/>
            <person name="Katsuta N."/>
            <person name="Sato K."/>
            <person name="Tanikawa M."/>
            <person name="Yamazaki M."/>
            <person name="Ninomiya K."/>
            <person name="Ishibashi T."/>
            <person name="Yamashita H."/>
            <person name="Murakawa K."/>
            <person name="Fujimori K."/>
            <person name="Tanai H."/>
            <person name="Kimata M."/>
            <person name="Watanabe M."/>
            <person name="Hiraoka S."/>
            <person name="Chiba Y."/>
            <person name="Ishida S."/>
            <person name="Ono Y."/>
            <person name="Takiguchi S."/>
            <person name="Watanabe S."/>
            <person name="Yosida M."/>
            <person name="Hotuta T."/>
            <person name="Kusano J."/>
            <person name="Kanehori K."/>
            <person name="Takahashi-Fujii A."/>
            <person name="Hara H."/>
            <person name="Tanase T.-O."/>
            <person name="Nomura Y."/>
            <person name="Togiya S."/>
            <person name="Komai F."/>
            <person name="Hara R."/>
            <person name="Takeuchi K."/>
            <person name="Arita M."/>
            <person name="Imose N."/>
            <person name="Musashino K."/>
            <person name="Yuuki H."/>
            <person name="Oshima A."/>
            <person name="Sasaki N."/>
            <person name="Aotsuka S."/>
            <person name="Yoshikawa Y."/>
            <person name="Matsunawa H."/>
            <person name="Ichihara T."/>
            <person name="Shiohata N."/>
            <person name="Sano S."/>
            <person name="Moriya S."/>
            <person name="Momiyama H."/>
            <person name="Satoh N."/>
            <person name="Takami S."/>
            <person name="Terashima Y."/>
            <person name="Suzuki O."/>
            <person name="Nakagawa S."/>
            <person name="Senoh A."/>
            <person name="Mizoguchi H."/>
            <person name="Goto Y."/>
            <person name="Shimizu F."/>
            <person name="Wakebe H."/>
            <person name="Hishigaki H."/>
            <person name="Watanabe T."/>
            <person name="Sugiyama A."/>
            <person name="Takemoto M."/>
            <person name="Kawakami B."/>
            <person name="Yamazaki M."/>
            <person name="Watanabe K."/>
            <person name="Kumagai A."/>
            <person name="Itakura S."/>
            <person name="Fukuzumi Y."/>
            <person name="Fujimori Y."/>
            <person name="Komiyama M."/>
            <person name="Tashiro H."/>
            <person name="Tanigami A."/>
            <person name="Fujiwara T."/>
            <person name="Ono T."/>
            <person name="Yamada K."/>
            <person name="Fujii Y."/>
            <person name="Ozaki K."/>
            <person name="Hirao M."/>
            <person name="Ohmori Y."/>
            <person name="Kawabata A."/>
            <person name="Hikiji T."/>
            <person name="Kobatake N."/>
            <person name="Inagaki H."/>
            <person name="Ikema Y."/>
            <person name="Okamoto S."/>
            <person name="Okitani R."/>
            <person name="Kawakami T."/>
            <person name="Noguchi S."/>
            <person name="Itoh T."/>
            <person name="Shigeta K."/>
            <person name="Senba T."/>
            <person name="Matsumura K."/>
            <person name="Nakajima Y."/>
            <person name="Mizuno T."/>
            <person name="Morinaga M."/>
            <person name="Sasaki M."/>
            <person name="Togashi T."/>
            <person name="Oyama M."/>
            <person name="Hata H."/>
            <person name="Watanabe M."/>
            <person name="Komatsu T."/>
            <person name="Mizushima-Sugano J."/>
            <person name="Satoh T."/>
            <person name="Shirai Y."/>
            <person name="Takahashi Y."/>
            <person name="Nakagawa K."/>
            <person name="Okumura K."/>
            <person name="Nagase T."/>
            <person name="Nomura N."/>
            <person name="Kikuchi H."/>
            <person name="Masuho Y."/>
            <person name="Yamashita R."/>
            <person name="Nakai K."/>
            <person name="Yada T."/>
            <person name="Nakamura Y."/>
            <person name="Ohara O."/>
            <person name="Isogai T."/>
            <person name="Sugano S."/>
        </authorList>
    </citation>
    <scope>NUCLEOTIDE SEQUENCE [LARGE SCALE MRNA] (ISOFORMS 1 AND 2)</scope>
    <source>
        <tissue>Uterus</tissue>
    </source>
</reference>
<reference key="3">
    <citation type="journal article" date="2006" name="Nature">
        <title>DNA sequence of human chromosome 17 and analysis of rearrangement in the human lineage.</title>
        <authorList>
            <person name="Zody M.C."/>
            <person name="Garber M."/>
            <person name="Adams D.J."/>
            <person name="Sharpe T."/>
            <person name="Harrow J."/>
            <person name="Lupski J.R."/>
            <person name="Nicholson C."/>
            <person name="Searle S.M."/>
            <person name="Wilming L."/>
            <person name="Young S.K."/>
            <person name="Abouelleil A."/>
            <person name="Allen N.R."/>
            <person name="Bi W."/>
            <person name="Bloom T."/>
            <person name="Borowsky M.L."/>
            <person name="Bugalter B.E."/>
            <person name="Butler J."/>
            <person name="Chang J.L."/>
            <person name="Chen C.-K."/>
            <person name="Cook A."/>
            <person name="Corum B."/>
            <person name="Cuomo C.A."/>
            <person name="de Jong P.J."/>
            <person name="DeCaprio D."/>
            <person name="Dewar K."/>
            <person name="FitzGerald M."/>
            <person name="Gilbert J."/>
            <person name="Gibson R."/>
            <person name="Gnerre S."/>
            <person name="Goldstein S."/>
            <person name="Grafham D.V."/>
            <person name="Grocock R."/>
            <person name="Hafez N."/>
            <person name="Hagopian D.S."/>
            <person name="Hart E."/>
            <person name="Norman C.H."/>
            <person name="Humphray S."/>
            <person name="Jaffe D.B."/>
            <person name="Jones M."/>
            <person name="Kamal M."/>
            <person name="Khodiyar V.K."/>
            <person name="LaButti K."/>
            <person name="Laird G."/>
            <person name="Lehoczky J."/>
            <person name="Liu X."/>
            <person name="Lokyitsang T."/>
            <person name="Loveland J."/>
            <person name="Lui A."/>
            <person name="Macdonald P."/>
            <person name="Major J.E."/>
            <person name="Matthews L."/>
            <person name="Mauceli E."/>
            <person name="McCarroll S.A."/>
            <person name="Mihalev A.H."/>
            <person name="Mudge J."/>
            <person name="Nguyen C."/>
            <person name="Nicol R."/>
            <person name="O'Leary S.B."/>
            <person name="Osoegawa K."/>
            <person name="Schwartz D.C."/>
            <person name="Shaw-Smith C."/>
            <person name="Stankiewicz P."/>
            <person name="Steward C."/>
            <person name="Swarbreck D."/>
            <person name="Venkataraman V."/>
            <person name="Whittaker C.A."/>
            <person name="Yang X."/>
            <person name="Zimmer A.R."/>
            <person name="Bradley A."/>
            <person name="Hubbard T."/>
            <person name="Birren B.W."/>
            <person name="Rogers J."/>
            <person name="Lander E.S."/>
            <person name="Nusbaum C."/>
        </authorList>
    </citation>
    <scope>NUCLEOTIDE SEQUENCE [LARGE SCALE GENOMIC DNA]</scope>
</reference>
<reference key="4">
    <citation type="submission" date="2005-07" db="EMBL/GenBank/DDBJ databases">
        <authorList>
            <person name="Mural R.J."/>
            <person name="Istrail S."/>
            <person name="Sutton G.G."/>
            <person name="Florea L."/>
            <person name="Halpern A.L."/>
            <person name="Mobarry C.M."/>
            <person name="Lippert R."/>
            <person name="Walenz B."/>
            <person name="Shatkay H."/>
            <person name="Dew I."/>
            <person name="Miller J.R."/>
            <person name="Flanigan M.J."/>
            <person name="Edwards N.J."/>
            <person name="Bolanos R."/>
            <person name="Fasulo D."/>
            <person name="Halldorsson B.V."/>
            <person name="Hannenhalli S."/>
            <person name="Turner R."/>
            <person name="Yooseph S."/>
            <person name="Lu F."/>
            <person name="Nusskern D.R."/>
            <person name="Shue B.C."/>
            <person name="Zheng X.H."/>
            <person name="Zhong F."/>
            <person name="Delcher A.L."/>
            <person name="Huson D.H."/>
            <person name="Kravitz S.A."/>
            <person name="Mouchard L."/>
            <person name="Reinert K."/>
            <person name="Remington K.A."/>
            <person name="Clark A.G."/>
            <person name="Waterman M.S."/>
            <person name="Eichler E.E."/>
            <person name="Adams M.D."/>
            <person name="Hunkapiller M.W."/>
            <person name="Myers E.W."/>
            <person name="Venter J.C."/>
        </authorList>
    </citation>
    <scope>NUCLEOTIDE SEQUENCE [LARGE SCALE GENOMIC DNA]</scope>
</reference>
<reference key="5">
    <citation type="journal article" date="2004" name="Genome Res.">
        <title>The status, quality, and expansion of the NIH full-length cDNA project: the Mammalian Gene Collection (MGC).</title>
        <authorList>
            <consortium name="The MGC Project Team"/>
        </authorList>
    </citation>
    <scope>NUCLEOTIDE SEQUENCE [LARGE SCALE MRNA] (ISOFORM 1)</scope>
    <scope>VARIANT VAL-173</scope>
    <source>
        <tissue>PNS</tissue>
    </source>
</reference>
<reference key="6">
    <citation type="journal article" date="2004" name="Protein Sci.">
        <title>Signal peptide prediction based on analysis of experimentally verified cleavage sites.</title>
        <authorList>
            <person name="Zhang Z."/>
            <person name="Henzel W.J."/>
        </authorList>
    </citation>
    <scope>PROTEIN SEQUENCE OF 22-36</scope>
</reference>
<reference key="7">
    <citation type="journal article" date="2005" name="J. Proteome Res.">
        <title>Human plasma N-glycoproteome analysis by immunoaffinity subtraction, hydrazide chemistry, and mass spectrometry.</title>
        <authorList>
            <person name="Liu T."/>
            <person name="Qian W.-J."/>
            <person name="Gritsenko M.A."/>
            <person name="Camp D.G. II"/>
            <person name="Monroe M.E."/>
            <person name="Moore R.J."/>
            <person name="Smith R.D."/>
        </authorList>
    </citation>
    <scope>GLYCOSYLATION [LARGE SCALE ANALYSIS] AT ASN-137</scope>
    <source>
        <tissue>Plasma</tissue>
    </source>
</reference>
<reference key="8">
    <citation type="journal article" date="2009" name="J. Proteome Res.">
        <title>Glycoproteomics analysis of human liver tissue by combination of multiple enzyme digestion and hydrazide chemistry.</title>
        <authorList>
            <person name="Chen R."/>
            <person name="Jiang X."/>
            <person name="Sun D."/>
            <person name="Han G."/>
            <person name="Wang F."/>
            <person name="Ye M."/>
            <person name="Wang L."/>
            <person name="Zou H."/>
        </authorList>
    </citation>
    <scope>GLYCOSYLATION [LARGE SCALE ANALYSIS] AT ASN-87 AND ASN-137</scope>
    <source>
        <tissue>Liver</tissue>
    </source>
</reference>
<reference key="9">
    <citation type="journal article" date="2016" name="J. Biol. Chem.">
        <title>Characterization of microfibrillar-associated protein 4 (MFAP4) as a tropoelastin- and fibrillin-binding protein involved in elastic fiber formation.</title>
        <authorList>
            <person name="Pilecki B."/>
            <person name="Holm A.T."/>
            <person name="Schlosser A."/>
            <person name="Moeller J.B."/>
            <person name="Wohl A.P."/>
            <person name="Zuk A.V."/>
            <person name="Heumueller S.E."/>
            <person name="Wallis R."/>
            <person name="Moestrup S.K."/>
            <person name="Sengle G."/>
            <person name="Holmskov U."/>
            <person name="Sorensen G.L."/>
        </authorList>
    </citation>
    <scope>FUNCTION</scope>
    <scope>SUBUNIT</scope>
    <scope>INTERACTION WITH FBN1; FBN2; COL1A1; ELN AND LOX</scope>
    <scope>SUBCELLULAR LOCATION</scope>
    <scope>MUTAGENESIS OF SER-203 AND PHE-241</scope>
</reference>
<accession>P55083</accession>
<accession>A8KAJ1</accession>
<accession>A8MVM2</accession>
<accession>B4E317</accession>
<accession>Q6P680</accession>
<organism>
    <name type="scientific">Homo sapiens</name>
    <name type="common">Human</name>
    <dbReference type="NCBI Taxonomy" id="9606"/>
    <lineage>
        <taxon>Eukaryota</taxon>
        <taxon>Metazoa</taxon>
        <taxon>Chordata</taxon>
        <taxon>Craniata</taxon>
        <taxon>Vertebrata</taxon>
        <taxon>Euteleostomi</taxon>
        <taxon>Mammalia</taxon>
        <taxon>Eutheria</taxon>
        <taxon>Euarchontoglires</taxon>
        <taxon>Primates</taxon>
        <taxon>Haplorrhini</taxon>
        <taxon>Catarrhini</taxon>
        <taxon>Hominidae</taxon>
        <taxon>Homo</taxon>
    </lineage>
</organism>
<feature type="signal peptide" evidence="3">
    <location>
        <begin position="1"/>
        <end position="21"/>
    </location>
</feature>
<feature type="chain" id="PRO_0000009134" description="Microfibril-associated glycoprotein 4">
    <location>
        <begin position="22"/>
        <end position="255"/>
    </location>
</feature>
<feature type="domain" description="Fibrinogen C-terminal" evidence="2">
    <location>
        <begin position="32"/>
        <end position="255"/>
    </location>
</feature>
<feature type="short sequence motif" description="Cell attachment site" evidence="1">
    <location>
        <begin position="26"/>
        <end position="28"/>
    </location>
</feature>
<feature type="glycosylation site" description="N-linked (GlcNAc...) asparagine" evidence="6">
    <location>
        <position position="87"/>
    </location>
</feature>
<feature type="glycosylation site" description="N-linked (GlcNAc...) asparagine" evidence="5 6">
    <location>
        <position position="137"/>
    </location>
</feature>
<feature type="splice variant" id="VSP_045831" description="In isoform 2." evidence="8">
    <original>MK</original>
    <variation>MGELSPLQRPLATEGTMKAQGVLLKL</variation>
    <location>
        <begin position="1"/>
        <end position="2"/>
    </location>
</feature>
<feature type="sequence variant" id="VAR_069073" description="In dbSNP:rs17855749." evidence="4">
    <original>A</original>
    <variation>V</variation>
    <location>
        <position position="173"/>
    </location>
</feature>
<feature type="mutagenesis site" description="No effect on its interaction with COL1A1 and ELN." evidence="7">
    <original>S</original>
    <variation>A</variation>
    <location>
        <position position="203"/>
    </location>
</feature>
<feature type="mutagenesis site" description="Moderate reduction in its interaction with COL1A1. Significant reduction in its interaction with ELN." evidence="7">
    <original>S</original>
    <variation>Y</variation>
    <location>
        <position position="203"/>
    </location>
</feature>
<feature type="mutagenesis site" description="Significant reduction in its interaction with COL1A1 and ELN." evidence="7">
    <original>F</original>
    <variation>A</variation>
    <location>
        <position position="241"/>
    </location>
</feature>
<feature type="mutagenesis site" description="Significant reduction in its interaction with COL1A1 and ELN." evidence="7">
    <original>F</original>
    <variation>W</variation>
    <location>
        <position position="241"/>
    </location>
</feature>
<feature type="sequence conflict" description="In Ref. 2; BAG65329." evidence="9" ref="2">
    <original>F</original>
    <variation>S</variation>
    <location>
        <position position="69"/>
    </location>
</feature>
<feature type="helix" evidence="10">
    <location>
        <begin position="41"/>
        <end position="47"/>
    </location>
</feature>
<feature type="strand" evidence="10">
    <location>
        <begin position="53"/>
        <end position="57"/>
    </location>
</feature>
<feature type="strand" evidence="10">
    <location>
        <begin position="66"/>
        <end position="71"/>
    </location>
</feature>
<feature type="helix" evidence="10">
    <location>
        <begin position="74"/>
        <end position="76"/>
    </location>
</feature>
<feature type="strand" evidence="10">
    <location>
        <begin position="79"/>
        <end position="88"/>
    </location>
</feature>
<feature type="helix" evidence="10">
    <location>
        <begin position="96"/>
        <end position="101"/>
    </location>
</feature>
<feature type="strand" evidence="10">
    <location>
        <begin position="103"/>
        <end position="111"/>
    </location>
</feature>
<feature type="helix" evidence="10">
    <location>
        <begin position="114"/>
        <end position="123"/>
    </location>
</feature>
<feature type="strand" evidence="10">
    <location>
        <begin position="126"/>
        <end position="133"/>
    </location>
</feature>
<feature type="strand" evidence="10">
    <location>
        <begin position="139"/>
        <end position="150"/>
    </location>
</feature>
<feature type="turn" evidence="10">
    <location>
        <begin position="156"/>
        <end position="161"/>
    </location>
</feature>
<feature type="strand" evidence="10">
    <location>
        <begin position="163"/>
        <end position="165"/>
    </location>
</feature>
<feature type="strand" evidence="10">
    <location>
        <begin position="168"/>
        <end position="170"/>
    </location>
</feature>
<feature type="helix" evidence="10">
    <location>
        <begin position="177"/>
        <end position="179"/>
    </location>
</feature>
<feature type="turn" evidence="10">
    <location>
        <begin position="180"/>
        <end position="182"/>
    </location>
</feature>
<feature type="strand" evidence="10">
    <location>
        <begin position="188"/>
        <end position="190"/>
    </location>
</feature>
<feature type="strand" evidence="10">
    <location>
        <begin position="193"/>
        <end position="197"/>
    </location>
</feature>
<feature type="helix" evidence="10">
    <location>
        <begin position="199"/>
        <end position="203"/>
    </location>
</feature>
<feature type="strand" evidence="10">
    <location>
        <begin position="210"/>
        <end position="212"/>
    </location>
</feature>
<feature type="strand" evidence="10">
    <location>
        <begin position="227"/>
        <end position="230"/>
    </location>
</feature>
<feature type="helix" evidence="10">
    <location>
        <begin position="236"/>
        <end position="239"/>
    </location>
</feature>
<feature type="strand" evidence="10">
    <location>
        <begin position="241"/>
        <end position="244"/>
    </location>
</feature>
<feature type="strand" evidence="10">
    <location>
        <begin position="246"/>
        <end position="254"/>
    </location>
</feature>
<dbReference type="EMBL" id="L38486">
    <property type="protein sequence ID" value="AAB00968.1"/>
    <property type="status" value="ALT_INIT"/>
    <property type="molecule type" value="mRNA"/>
</dbReference>
<dbReference type="EMBL" id="AK293056">
    <property type="protein sequence ID" value="BAF85745.1"/>
    <property type="molecule type" value="mRNA"/>
</dbReference>
<dbReference type="EMBL" id="AK304528">
    <property type="protein sequence ID" value="BAG65329.1"/>
    <property type="status" value="ALT_TERM"/>
    <property type="molecule type" value="mRNA"/>
</dbReference>
<dbReference type="EMBL" id="AC124066">
    <property type="status" value="NOT_ANNOTATED_CDS"/>
    <property type="molecule type" value="Genomic_DNA"/>
</dbReference>
<dbReference type="EMBL" id="CH471212">
    <property type="protein sequence ID" value="EAW50888.1"/>
    <property type="molecule type" value="Genomic_DNA"/>
</dbReference>
<dbReference type="EMBL" id="CH471212">
    <property type="protein sequence ID" value="EAW50889.1"/>
    <property type="molecule type" value="Genomic_DNA"/>
</dbReference>
<dbReference type="EMBL" id="BC062415">
    <property type="protein sequence ID" value="AAH62415.1"/>
    <property type="molecule type" value="mRNA"/>
</dbReference>
<dbReference type="CCDS" id="CCDS11208.1">
    <molecule id="P55083-1"/>
</dbReference>
<dbReference type="CCDS" id="CCDS56023.1">
    <molecule id="P55083-2"/>
</dbReference>
<dbReference type="RefSeq" id="NP_001185624.1">
    <molecule id="P55083-2"/>
    <property type="nucleotide sequence ID" value="NM_001198695.2"/>
</dbReference>
<dbReference type="RefSeq" id="NP_002395.1">
    <molecule id="P55083-1"/>
    <property type="nucleotide sequence ID" value="NM_002404.3"/>
</dbReference>
<dbReference type="PDB" id="7ZMK">
    <property type="method" value="X-ray"/>
    <property type="resolution" value="3.40 A"/>
    <property type="chains" value="A/D/I/L/O/R/U/X=1-255"/>
</dbReference>
<dbReference type="PDB" id="8UN7">
    <property type="method" value="EM"/>
    <property type="resolution" value="3.55 A"/>
    <property type="chains" value="A/B/C/D/E/F/G/H=21-255"/>
</dbReference>
<dbReference type="PDBsum" id="7ZMK"/>
<dbReference type="PDBsum" id="8UN7"/>
<dbReference type="EMDB" id="EMD-42394"/>
<dbReference type="EMDB" id="EMD-42398"/>
<dbReference type="SMR" id="P55083"/>
<dbReference type="BioGRID" id="110397">
    <property type="interactions" value="163"/>
</dbReference>
<dbReference type="FunCoup" id="P55083">
    <property type="interactions" value="273"/>
</dbReference>
<dbReference type="IntAct" id="P55083">
    <property type="interactions" value="145"/>
</dbReference>
<dbReference type="MINT" id="P55083"/>
<dbReference type="STRING" id="9606.ENSP00000378957"/>
<dbReference type="GlyConnect" id="1512">
    <property type="glycosylation" value="17 N-Linked glycans (2 sites)"/>
</dbReference>
<dbReference type="GlyCosmos" id="P55083">
    <property type="glycosylation" value="2 sites, 16 glycans"/>
</dbReference>
<dbReference type="GlyGen" id="P55083">
    <property type="glycosylation" value="3 sites, 118 N-linked glycans (2 sites)"/>
</dbReference>
<dbReference type="iPTMnet" id="P55083"/>
<dbReference type="PhosphoSitePlus" id="P55083"/>
<dbReference type="BioMuta" id="MFAP4"/>
<dbReference type="DMDM" id="2506403"/>
<dbReference type="CPTAC" id="CPTAC-2226"/>
<dbReference type="jPOST" id="P55083"/>
<dbReference type="MassIVE" id="P55083"/>
<dbReference type="PaxDb" id="9606-ENSP00000378957"/>
<dbReference type="PeptideAtlas" id="P55083"/>
<dbReference type="ProteomicsDB" id="2188"/>
<dbReference type="ProteomicsDB" id="56785">
    <molecule id="P55083-1"/>
</dbReference>
<dbReference type="Antibodypedia" id="25925">
    <property type="antibodies" value="254 antibodies from 27 providers"/>
</dbReference>
<dbReference type="DNASU" id="4239"/>
<dbReference type="Ensembl" id="ENST00000299610.5">
    <molecule id="P55083-1"/>
    <property type="protein sequence ID" value="ENSP00000299610.5"/>
    <property type="gene ID" value="ENSG00000166482.12"/>
</dbReference>
<dbReference type="Ensembl" id="ENST00000395592.6">
    <molecule id="P55083-2"/>
    <property type="protein sequence ID" value="ENSP00000378957.2"/>
    <property type="gene ID" value="ENSG00000166482.12"/>
</dbReference>
<dbReference type="GeneID" id="4239"/>
<dbReference type="KEGG" id="hsa:4239"/>
<dbReference type="MANE-Select" id="ENST00000299610.5">
    <property type="protein sequence ID" value="ENSP00000299610.5"/>
    <property type="RefSeq nucleotide sequence ID" value="NM_002404.3"/>
    <property type="RefSeq protein sequence ID" value="NP_002395.1"/>
</dbReference>
<dbReference type="UCSC" id="uc002gvs.4">
    <molecule id="P55083-1"/>
    <property type="organism name" value="human"/>
</dbReference>
<dbReference type="AGR" id="HGNC:7035"/>
<dbReference type="CTD" id="4239"/>
<dbReference type="DisGeNET" id="4239"/>
<dbReference type="GeneCards" id="MFAP4"/>
<dbReference type="HGNC" id="HGNC:7035">
    <property type="gene designation" value="MFAP4"/>
</dbReference>
<dbReference type="HPA" id="ENSG00000166482">
    <property type="expression patterns" value="Low tissue specificity"/>
</dbReference>
<dbReference type="MIM" id="600596">
    <property type="type" value="gene"/>
</dbReference>
<dbReference type="neXtProt" id="NX_P55083"/>
<dbReference type="OpenTargets" id="ENSG00000166482"/>
<dbReference type="PharmGKB" id="PA30771"/>
<dbReference type="VEuPathDB" id="HostDB:ENSG00000166482"/>
<dbReference type="eggNOG" id="KOG2579">
    <property type="taxonomic scope" value="Eukaryota"/>
</dbReference>
<dbReference type="GeneTree" id="ENSGT00940000154615"/>
<dbReference type="HOGENOM" id="CLU_038628_6_0_1"/>
<dbReference type="InParanoid" id="P55083"/>
<dbReference type="OMA" id="QPCGEDS"/>
<dbReference type="OrthoDB" id="9990035at2759"/>
<dbReference type="PAN-GO" id="P55083">
    <property type="GO annotations" value="7 GO annotations based on evolutionary models"/>
</dbReference>
<dbReference type="PhylomeDB" id="P55083"/>
<dbReference type="TreeFam" id="TF336658"/>
<dbReference type="PathwayCommons" id="P55083"/>
<dbReference type="Reactome" id="R-HSA-2129379">
    <property type="pathway name" value="Molecules associated with elastic fibres"/>
</dbReference>
<dbReference type="SignaLink" id="P55083"/>
<dbReference type="BioGRID-ORCS" id="4239">
    <property type="hits" value="11 hits in 1145 CRISPR screens"/>
</dbReference>
<dbReference type="ChiTaRS" id="MFAP4">
    <property type="organism name" value="human"/>
</dbReference>
<dbReference type="GenomeRNAi" id="4239"/>
<dbReference type="Pharos" id="P55083">
    <property type="development level" value="Tbio"/>
</dbReference>
<dbReference type="PRO" id="PR:P55083"/>
<dbReference type="Proteomes" id="UP000005640">
    <property type="component" value="Chromosome 17"/>
</dbReference>
<dbReference type="RNAct" id="P55083">
    <property type="molecule type" value="protein"/>
</dbReference>
<dbReference type="Bgee" id="ENSG00000166482">
    <property type="expression patterns" value="Expressed in right coronary artery and 157 other cell types or tissues"/>
</dbReference>
<dbReference type="ExpressionAtlas" id="P55083">
    <property type="expression patterns" value="baseline and differential"/>
</dbReference>
<dbReference type="GO" id="GO:0062023">
    <property type="term" value="C:collagen-containing extracellular matrix"/>
    <property type="evidence" value="ECO:0000314"/>
    <property type="project" value="UniProtKB"/>
</dbReference>
<dbReference type="GO" id="GO:0071953">
    <property type="term" value="C:elastic fiber"/>
    <property type="evidence" value="ECO:0000314"/>
    <property type="project" value="BHF-UCL"/>
</dbReference>
<dbReference type="GO" id="GO:0005576">
    <property type="term" value="C:extracellular region"/>
    <property type="evidence" value="ECO:0000314"/>
    <property type="project" value="BHF-UCL"/>
</dbReference>
<dbReference type="GO" id="GO:0005615">
    <property type="term" value="C:extracellular space"/>
    <property type="evidence" value="ECO:0000318"/>
    <property type="project" value="GO_Central"/>
</dbReference>
<dbReference type="GO" id="GO:0001527">
    <property type="term" value="C:microfibril"/>
    <property type="evidence" value="ECO:0000314"/>
    <property type="project" value="BHF-UCL"/>
</dbReference>
<dbReference type="GO" id="GO:0007155">
    <property type="term" value="P:cell adhesion"/>
    <property type="evidence" value="ECO:0007669"/>
    <property type="project" value="UniProtKB-KW"/>
</dbReference>
<dbReference type="GO" id="GO:0071493">
    <property type="term" value="P:cellular response to UV-B"/>
    <property type="evidence" value="ECO:0000314"/>
    <property type="project" value="BHF-UCL"/>
</dbReference>
<dbReference type="GO" id="GO:0048251">
    <property type="term" value="P:elastic fiber assembly"/>
    <property type="evidence" value="ECO:0000314"/>
    <property type="project" value="BHF-UCL"/>
</dbReference>
<dbReference type="GO" id="GO:0010712">
    <property type="term" value="P:regulation of collagen metabolic process"/>
    <property type="evidence" value="ECO:0000314"/>
    <property type="project" value="BHF-UCL"/>
</dbReference>
<dbReference type="GO" id="GO:0097435">
    <property type="term" value="P:supramolecular fiber organization"/>
    <property type="evidence" value="ECO:0000314"/>
    <property type="project" value="BHF-UCL"/>
</dbReference>
<dbReference type="GO" id="GO:0009650">
    <property type="term" value="P:UV protection"/>
    <property type="evidence" value="ECO:0000314"/>
    <property type="project" value="BHF-UCL"/>
</dbReference>
<dbReference type="CDD" id="cd00087">
    <property type="entry name" value="FReD"/>
    <property type="match status" value="1"/>
</dbReference>
<dbReference type="FunFam" id="3.90.215.10:FF:000004">
    <property type="entry name" value="microfibril-associated glycoprotein 4"/>
    <property type="match status" value="1"/>
</dbReference>
<dbReference type="Gene3D" id="3.90.215.10">
    <property type="entry name" value="Gamma Fibrinogen, chain A, domain 1"/>
    <property type="match status" value="1"/>
</dbReference>
<dbReference type="InterPro" id="IPR036056">
    <property type="entry name" value="Fibrinogen-like_C"/>
</dbReference>
<dbReference type="InterPro" id="IPR014716">
    <property type="entry name" value="Fibrinogen_a/b/g_C_1"/>
</dbReference>
<dbReference type="InterPro" id="IPR002181">
    <property type="entry name" value="Fibrinogen_a/b/g_C_dom"/>
</dbReference>
<dbReference type="InterPro" id="IPR050373">
    <property type="entry name" value="Fibrinogen_C-term_domain"/>
</dbReference>
<dbReference type="NCBIfam" id="NF040941">
    <property type="entry name" value="GGGWT_bact"/>
    <property type="match status" value="1"/>
</dbReference>
<dbReference type="PANTHER" id="PTHR19143">
    <property type="entry name" value="FIBRINOGEN/TENASCIN/ANGIOPOEITIN"/>
    <property type="match status" value="1"/>
</dbReference>
<dbReference type="PANTHER" id="PTHR19143:SF225">
    <property type="entry name" value="MICROFIBRIL-ASSOCIATED GLYCOPROTEIN 4"/>
    <property type="match status" value="1"/>
</dbReference>
<dbReference type="Pfam" id="PF00147">
    <property type="entry name" value="Fibrinogen_C"/>
    <property type="match status" value="1"/>
</dbReference>
<dbReference type="SMART" id="SM00186">
    <property type="entry name" value="FBG"/>
    <property type="match status" value="1"/>
</dbReference>
<dbReference type="SUPFAM" id="SSF56496">
    <property type="entry name" value="Fibrinogen C-terminal domain-like"/>
    <property type="match status" value="1"/>
</dbReference>
<dbReference type="PROSITE" id="PS51406">
    <property type="entry name" value="FIBRINOGEN_C_2"/>
    <property type="match status" value="1"/>
</dbReference>
<evidence type="ECO:0000255" key="1"/>
<evidence type="ECO:0000255" key="2">
    <source>
        <dbReference type="PROSITE-ProRule" id="PRU00739"/>
    </source>
</evidence>
<evidence type="ECO:0000269" key="3">
    <source>
    </source>
</evidence>
<evidence type="ECO:0000269" key="4">
    <source>
    </source>
</evidence>
<evidence type="ECO:0000269" key="5">
    <source>
    </source>
</evidence>
<evidence type="ECO:0000269" key="6">
    <source>
    </source>
</evidence>
<evidence type="ECO:0000269" key="7">
    <source>
    </source>
</evidence>
<evidence type="ECO:0000303" key="8">
    <source>
    </source>
</evidence>
<evidence type="ECO:0000305" key="9"/>
<evidence type="ECO:0007829" key="10">
    <source>
        <dbReference type="PDB" id="7ZMK"/>
    </source>
</evidence>